<evidence type="ECO:0000250" key="1"/>
<evidence type="ECO:0000255" key="2">
    <source>
        <dbReference type="PROSITE-ProRule" id="PRU10001"/>
    </source>
</evidence>
<evidence type="ECO:0000269" key="3">
    <source>
    </source>
</evidence>
<evidence type="ECO:0000269" key="4">
    <source>
    </source>
</evidence>
<evidence type="ECO:0000305" key="5"/>
<keyword id="KW-0520">NAD</keyword>
<keyword id="KW-0560">Oxidoreductase</keyword>
<keyword id="KW-1185">Reference proteome</keyword>
<protein>
    <recommendedName>
        <fullName>Alcohol dehydrogenase 1</fullName>
        <ecNumber>1.1.1.1</ecNumber>
    </recommendedName>
</protein>
<organism>
    <name type="scientific">Drosophila mojavensis</name>
    <name type="common">Fruit fly</name>
    <dbReference type="NCBI Taxonomy" id="7230"/>
    <lineage>
        <taxon>Eukaryota</taxon>
        <taxon>Metazoa</taxon>
        <taxon>Ecdysozoa</taxon>
        <taxon>Arthropoda</taxon>
        <taxon>Hexapoda</taxon>
        <taxon>Insecta</taxon>
        <taxon>Pterygota</taxon>
        <taxon>Neoptera</taxon>
        <taxon>Endopterygota</taxon>
        <taxon>Diptera</taxon>
        <taxon>Brachycera</taxon>
        <taxon>Muscomorpha</taxon>
        <taxon>Ephydroidea</taxon>
        <taxon>Drosophilidae</taxon>
        <taxon>Drosophila</taxon>
    </lineage>
</organism>
<reference key="1">
    <citation type="journal article" date="1988" name="Genetics">
        <title>Structure and evolution of the Adh genes of Drosophila mojavensis.</title>
        <authorList>
            <person name="Atkinson P.W."/>
            <person name="Mills L.E."/>
            <person name="Starmer W.T."/>
            <person name="Sullivan D.T."/>
        </authorList>
    </citation>
    <scope>NUCLEOTIDE SEQUENCE [GENOMIC DNA]</scope>
    <scope>VARIANTS THR-187; VAL-189 AND LEU-236</scope>
    <source>
        <strain>VRF</strain>
    </source>
</reference>
<reference key="2">
    <citation type="journal article" date="1992" name="Genetics">
        <title>Delineation of cis-acting sequences required for expression of Drosophila mojavensis Adh-1.</title>
        <authorList>
            <person name="Bayer C.A."/>
            <person name="Curtiss S.W."/>
            <person name="Weaver J.A."/>
            <person name="Sullivan D.T."/>
        </authorList>
    </citation>
    <scope>NUCLEOTIDE SEQUENCE [GENOMIC DNA]</scope>
    <scope>VARIANTS THR-187; VAL-189 AND LEU-236</scope>
    <source>
        <strain>VRF</strain>
    </source>
</reference>
<reference key="3">
    <citation type="journal article" date="2003" name="Genetics">
        <title>Sequence variation of alcohol dehydrogenase (Adh) paralogs in cactophilic Drosophila.</title>
        <authorList>
            <person name="Matzkin L.M."/>
            <person name="Eanes W.F."/>
        </authorList>
    </citation>
    <scope>NUCLEOTIDE SEQUENCE [GENOMIC DNA]</scope>
    <source>
        <strain>MJBC 103.3</strain>
        <strain>MJBC 108.5</strain>
        <strain>MJBC 115.4</strain>
        <strain>MJBC 157.3</strain>
        <strain>MJBC 202.2</strain>
        <strain>MJBC 205.1</strain>
        <strain>MJBC 25.3</strain>
        <strain>MJBC 33.3</strain>
        <strain>MJBC 35.1</strain>
        <strain>MJBC 39.3</strain>
        <strain>MJBC 47.3</strain>
        <strain>MJBC 80</strain>
        <strain>MJBC 95.1</strain>
    </source>
</reference>
<reference key="4">
    <citation type="journal article" date="2004" name="Mol. Biol. Evol.">
        <title>Population genetics and geographic variation of alcohol dehydrogenase (Adh) paralogs and glucose-6-phosphate dehydrogenase (G6pd) in Drosophila mojavensis.</title>
        <authorList>
            <person name="Matzkin L.M."/>
        </authorList>
    </citation>
    <scope>NUCLEOTIDE SEQUENCE [GENOMIC DNA]</scope>
    <source>
        <strain>MJS 115</strain>
        <strain>MJS 122</strain>
        <strain>MJS 127</strain>
        <strain>MJS 132</strain>
        <strain>MJS 14</strain>
        <strain>MJS 154</strain>
        <strain>MJS 36</strain>
        <strain>MJS 58.2</strain>
        <strain>MJS 68</strain>
        <strain>MJS 84</strain>
        <strain>MJS 87</strain>
    </source>
</reference>
<reference key="5">
    <citation type="journal article" date="2007" name="Nature">
        <title>Evolution of genes and genomes on the Drosophila phylogeny.</title>
        <authorList>
            <consortium name="Drosophila 12 genomes consortium"/>
        </authorList>
    </citation>
    <scope>NUCLEOTIDE SEQUENCE [LARGE SCALE GENOMIC DNA]</scope>
    <source>
        <strain>Tucson 15081-1352.22</strain>
    </source>
</reference>
<proteinExistence type="inferred from homology"/>
<sequence length="254" mass="27561">MAIANKNIIFVAGLGGIGFDTSREIVKKGPKNLVILDRIENPAAIAELKALNPKVTVTFYLYDVTVSVAESTKLLQKIFDQLKTVDLLINGAGILDDHQIERTIAVNFTGTVNTITAIMSFWDKRKGGPGGVIANVCSVTGFNAIYQVPVYSASKAAALSFTNSLAKLAPITGVTAYSINPGITKTPLLHKFNSWLDVEPRVGELLLEHPTQTSLECAQNFVKAIEANQNGAIWKVDLGTLEAIEWTKHWDSHI</sequence>
<dbReference type="EC" id="1.1.1.1"/>
<dbReference type="EMBL" id="M37276">
    <property type="protein sequence ID" value="AAA28335.1"/>
    <property type="molecule type" value="Genomic_DNA"/>
</dbReference>
<dbReference type="EMBL" id="X12536">
    <property type="protein sequence ID" value="CAA31055.1"/>
    <property type="molecule type" value="Genomic_DNA"/>
</dbReference>
<dbReference type="EMBL" id="AY154827">
    <property type="protein sequence ID" value="AAN86863.1"/>
    <property type="molecule type" value="Genomic_DNA"/>
</dbReference>
<dbReference type="EMBL" id="AY154828">
    <property type="protein sequence ID" value="AAN86864.1"/>
    <property type="molecule type" value="Genomic_DNA"/>
</dbReference>
<dbReference type="EMBL" id="AY154829">
    <property type="protein sequence ID" value="AAN86865.1"/>
    <property type="molecule type" value="Genomic_DNA"/>
</dbReference>
<dbReference type="EMBL" id="AY154830">
    <property type="protein sequence ID" value="AAN86866.1"/>
    <property type="molecule type" value="Genomic_DNA"/>
</dbReference>
<dbReference type="EMBL" id="AY154831">
    <property type="protein sequence ID" value="AAN86867.1"/>
    <property type="molecule type" value="Genomic_DNA"/>
</dbReference>
<dbReference type="EMBL" id="AY154832">
    <property type="protein sequence ID" value="AAN86868.1"/>
    <property type="molecule type" value="Genomic_DNA"/>
</dbReference>
<dbReference type="EMBL" id="AY154833">
    <property type="protein sequence ID" value="AAN86869.1"/>
    <property type="molecule type" value="Genomic_DNA"/>
</dbReference>
<dbReference type="EMBL" id="AY154834">
    <property type="protein sequence ID" value="AAN86870.1"/>
    <property type="molecule type" value="Genomic_DNA"/>
</dbReference>
<dbReference type="EMBL" id="AY154835">
    <property type="protein sequence ID" value="AAN86871.1"/>
    <property type="molecule type" value="Genomic_DNA"/>
</dbReference>
<dbReference type="EMBL" id="AY154836">
    <property type="protein sequence ID" value="AAN86872.1"/>
    <property type="molecule type" value="Genomic_DNA"/>
</dbReference>
<dbReference type="EMBL" id="AY154837">
    <property type="protein sequence ID" value="AAN86873.1"/>
    <property type="molecule type" value="Genomic_DNA"/>
</dbReference>
<dbReference type="EMBL" id="AY154838">
    <property type="protein sequence ID" value="AAN86874.1"/>
    <property type="molecule type" value="Genomic_DNA"/>
</dbReference>
<dbReference type="EMBL" id="AY154839">
    <property type="protein sequence ID" value="AAN86875.1"/>
    <property type="molecule type" value="Genomic_DNA"/>
</dbReference>
<dbReference type="EMBL" id="AY364493">
    <property type="protein sequence ID" value="AAR12927.1"/>
    <property type="molecule type" value="Genomic_DNA"/>
</dbReference>
<dbReference type="EMBL" id="AY364494">
    <property type="protein sequence ID" value="AAR12928.1"/>
    <property type="molecule type" value="Genomic_DNA"/>
</dbReference>
<dbReference type="EMBL" id="AY364495">
    <property type="protein sequence ID" value="AAR12929.1"/>
    <property type="molecule type" value="Genomic_DNA"/>
</dbReference>
<dbReference type="EMBL" id="AY364496">
    <property type="protein sequence ID" value="AAR12930.1"/>
    <property type="molecule type" value="Genomic_DNA"/>
</dbReference>
<dbReference type="EMBL" id="AY364497">
    <property type="protein sequence ID" value="AAR12931.1"/>
    <property type="molecule type" value="Genomic_DNA"/>
</dbReference>
<dbReference type="EMBL" id="AY364498">
    <property type="protein sequence ID" value="AAR12932.1"/>
    <property type="molecule type" value="Genomic_DNA"/>
</dbReference>
<dbReference type="EMBL" id="AY364499">
    <property type="protein sequence ID" value="AAR12933.1"/>
    <property type="molecule type" value="Genomic_DNA"/>
</dbReference>
<dbReference type="EMBL" id="AY364500">
    <property type="protein sequence ID" value="AAR12934.1"/>
    <property type="molecule type" value="Genomic_DNA"/>
</dbReference>
<dbReference type="EMBL" id="AY364501">
    <property type="protein sequence ID" value="AAR12935.1"/>
    <property type="molecule type" value="Genomic_DNA"/>
</dbReference>
<dbReference type="EMBL" id="AY364502">
    <property type="protein sequence ID" value="AAR12936.1"/>
    <property type="molecule type" value="Genomic_DNA"/>
</dbReference>
<dbReference type="EMBL" id="AY364503">
    <property type="protein sequence ID" value="AAR12937.1"/>
    <property type="molecule type" value="Genomic_DNA"/>
</dbReference>
<dbReference type="EMBL" id="AY364504">
    <property type="protein sequence ID" value="AAR12938.1"/>
    <property type="molecule type" value="Genomic_DNA"/>
</dbReference>
<dbReference type="EMBL" id="AY364505">
    <property type="protein sequence ID" value="AAR12939.1"/>
    <property type="molecule type" value="Genomic_DNA"/>
</dbReference>
<dbReference type="EMBL" id="AY364506">
    <property type="protein sequence ID" value="AAR12940.1"/>
    <property type="molecule type" value="Genomic_DNA"/>
</dbReference>
<dbReference type="EMBL" id="AY364507">
    <property type="protein sequence ID" value="AAR12941.1"/>
    <property type="molecule type" value="Genomic_DNA"/>
</dbReference>
<dbReference type="EMBL" id="CH933807">
    <property type="protein sequence ID" value="EDW12372.1"/>
    <property type="molecule type" value="Genomic_DNA"/>
</dbReference>
<dbReference type="PIR" id="S01902">
    <property type="entry name" value="S01902"/>
</dbReference>
<dbReference type="SMR" id="P09370"/>
<dbReference type="FunCoup" id="P09370">
    <property type="interactions" value="288"/>
</dbReference>
<dbReference type="EnsemblMetazoa" id="FBtr0168369">
    <property type="protein sequence ID" value="FBpp0166861"/>
    <property type="gene ID" value="FBgn0012566"/>
</dbReference>
<dbReference type="EnsemblMetazoa" id="XM_002002894.4">
    <property type="protein sequence ID" value="XP_002002930.1"/>
    <property type="gene ID" value="LOC6576953"/>
</dbReference>
<dbReference type="GeneID" id="6576953"/>
<dbReference type="KEGG" id="dmo:Dmoj_GI17644"/>
<dbReference type="eggNOG" id="KOG4169">
    <property type="taxonomic scope" value="Eukaryota"/>
</dbReference>
<dbReference type="HOGENOM" id="CLU_010194_2_16_1"/>
<dbReference type="InParanoid" id="P09370"/>
<dbReference type="OMA" id="WDIHEAG"/>
<dbReference type="OrthoDB" id="417891at2759"/>
<dbReference type="PhylomeDB" id="P09370"/>
<dbReference type="Proteomes" id="UP000009192">
    <property type="component" value="Unassembled WGS sequence"/>
</dbReference>
<dbReference type="GO" id="GO:0005737">
    <property type="term" value="C:cytoplasm"/>
    <property type="evidence" value="ECO:0007669"/>
    <property type="project" value="TreeGrafter"/>
</dbReference>
<dbReference type="GO" id="GO:0004022">
    <property type="term" value="F:alcohol dehydrogenase (NAD+) activity"/>
    <property type="evidence" value="ECO:0007669"/>
    <property type="project" value="UniProtKB-EC"/>
</dbReference>
<dbReference type="GO" id="GO:0006066">
    <property type="term" value="P:alcohol metabolic process"/>
    <property type="evidence" value="ECO:0007669"/>
    <property type="project" value="InterPro"/>
</dbReference>
<dbReference type="CDD" id="cd05323">
    <property type="entry name" value="ADH_SDR_c_like"/>
    <property type="match status" value="1"/>
</dbReference>
<dbReference type="FunFam" id="3.40.50.720:FF:000302">
    <property type="entry name" value="Alcohol dehydrogenase"/>
    <property type="match status" value="1"/>
</dbReference>
<dbReference type="Gene3D" id="3.40.50.720">
    <property type="entry name" value="NAD(P)-binding Rossmann-like Domain"/>
    <property type="match status" value="1"/>
</dbReference>
<dbReference type="InterPro" id="IPR002425">
    <property type="entry name" value="ADH_Drosophila-type"/>
</dbReference>
<dbReference type="InterPro" id="IPR036291">
    <property type="entry name" value="NAD(P)-bd_dom_sf"/>
</dbReference>
<dbReference type="InterPro" id="IPR020904">
    <property type="entry name" value="Sc_DH/Rdtase_CS"/>
</dbReference>
<dbReference type="InterPro" id="IPR002347">
    <property type="entry name" value="SDR_fam"/>
</dbReference>
<dbReference type="PANTHER" id="PTHR44229">
    <property type="entry name" value="15-HYDROXYPROSTAGLANDIN DEHYDROGENASE [NAD(+)]"/>
    <property type="match status" value="1"/>
</dbReference>
<dbReference type="PANTHER" id="PTHR44229:SF8">
    <property type="entry name" value="ALCOHOL DEHYDROGENASE-RELATED"/>
    <property type="match status" value="1"/>
</dbReference>
<dbReference type="Pfam" id="PF00106">
    <property type="entry name" value="adh_short"/>
    <property type="match status" value="1"/>
</dbReference>
<dbReference type="PRINTS" id="PR01168">
    <property type="entry name" value="ALCDHDRGNASE"/>
</dbReference>
<dbReference type="PRINTS" id="PR01167">
    <property type="entry name" value="INSADHFAMILY"/>
</dbReference>
<dbReference type="PRINTS" id="PR00080">
    <property type="entry name" value="SDRFAMILY"/>
</dbReference>
<dbReference type="SUPFAM" id="SSF51735">
    <property type="entry name" value="NAD(P)-binding Rossmann-fold domains"/>
    <property type="match status" value="1"/>
</dbReference>
<dbReference type="PROSITE" id="PS00061">
    <property type="entry name" value="ADH_SHORT"/>
    <property type="match status" value="1"/>
</dbReference>
<accession>P09370</accession>
<accession>Q6UPV9</accession>
<accession>Q6UPW6</accession>
<accession>Q6UPX2</accession>
<accession>Q867T9</accession>
<name>ADH1_DROMO</name>
<feature type="initiator methionine" description="Removed">
    <location>
        <position position="1"/>
    </location>
</feature>
<feature type="chain" id="PRO_0000054478" description="Alcohol dehydrogenase 1">
    <location>
        <begin position="2"/>
        <end position="254"/>
    </location>
</feature>
<feature type="active site" description="Proton acceptor" evidence="2">
    <location>
        <position position="151"/>
    </location>
</feature>
<feature type="binding site" evidence="1">
    <location>
        <begin position="10"/>
        <end position="33"/>
    </location>
    <ligand>
        <name>NAD(+)</name>
        <dbReference type="ChEBI" id="CHEBI:57540"/>
    </ligand>
</feature>
<feature type="binding site" evidence="1">
    <location>
        <position position="138"/>
    </location>
    <ligand>
        <name>substrate</name>
    </ligand>
</feature>
<feature type="sequence variant" description="In strain: VRF." evidence="3 4">
    <original>P</original>
    <variation>T</variation>
    <location>
        <position position="187"/>
    </location>
</feature>
<feature type="sequence variant" description="In strain: VRF." evidence="3 4">
    <original>L</original>
    <variation>V</variation>
    <location>
        <position position="189"/>
    </location>
</feature>
<feature type="sequence variant" description="In strain: VRF." evidence="3 4">
    <original>V</original>
    <variation>L</variation>
    <location>
        <position position="236"/>
    </location>
</feature>
<gene>
    <name type="primary">Adh1</name>
    <name type="ORF">GI17644</name>
</gene>
<comment type="catalytic activity">
    <reaction evidence="2">
        <text>a primary alcohol + NAD(+) = an aldehyde + NADH + H(+)</text>
        <dbReference type="Rhea" id="RHEA:10736"/>
        <dbReference type="ChEBI" id="CHEBI:15378"/>
        <dbReference type="ChEBI" id="CHEBI:15734"/>
        <dbReference type="ChEBI" id="CHEBI:17478"/>
        <dbReference type="ChEBI" id="CHEBI:57540"/>
        <dbReference type="ChEBI" id="CHEBI:57945"/>
        <dbReference type="EC" id="1.1.1.1"/>
    </reaction>
</comment>
<comment type="catalytic activity">
    <reaction evidence="2">
        <text>a secondary alcohol + NAD(+) = a ketone + NADH + H(+)</text>
        <dbReference type="Rhea" id="RHEA:10740"/>
        <dbReference type="ChEBI" id="CHEBI:15378"/>
        <dbReference type="ChEBI" id="CHEBI:17087"/>
        <dbReference type="ChEBI" id="CHEBI:35681"/>
        <dbReference type="ChEBI" id="CHEBI:57540"/>
        <dbReference type="ChEBI" id="CHEBI:57945"/>
        <dbReference type="EC" id="1.1.1.1"/>
    </reaction>
</comment>
<comment type="subunit">
    <text>Homodimer.</text>
</comment>
<comment type="similarity">
    <text evidence="5">Belongs to the short-chain dehydrogenases/reductases (SDR) family.</text>
</comment>